<keyword id="KW-0131">Cell cycle</keyword>
<keyword id="KW-0132">Cell division</keyword>
<keyword id="KW-0175">Coiled coil</keyword>
<keyword id="KW-0963">Cytoplasm</keyword>
<keyword id="KW-0238">DNA-binding</keyword>
<sequence>MAVSPKINRREHILQCLAQMLETNPGQRITTAKLASEVGVSEAALYRHFPSKARMFEGLIEFIEESLLSRINLIMDDEKDTMKRCQLVLQLLLIFAERNPGISRVLNGDALLGENERLRSRISNLFAKIETQLKQILREKTLREGKGFNLDEAILANLLLAFAEGRIAQFVRSEFKLKPTTHFDEQWRFIQHQLLQS</sequence>
<feature type="chain" id="PRO_1000188402" description="Nucleoid occlusion factor SlmA">
    <location>
        <begin position="1"/>
        <end position="197"/>
    </location>
</feature>
<feature type="domain" description="HTH tetR-type" evidence="1">
    <location>
        <begin position="7"/>
        <end position="67"/>
    </location>
</feature>
<feature type="DNA-binding region" description="H-T-H motif" evidence="1">
    <location>
        <begin position="30"/>
        <end position="49"/>
    </location>
</feature>
<feature type="coiled-coil region" evidence="1">
    <location>
        <begin position="109"/>
        <end position="136"/>
    </location>
</feature>
<protein>
    <recommendedName>
        <fullName evidence="1">Nucleoid occlusion factor SlmA</fullName>
    </recommendedName>
</protein>
<gene>
    <name evidence="1" type="primary">slmA</name>
    <name type="ordered locus">Sbal223_0399</name>
</gene>
<organism>
    <name type="scientific">Shewanella baltica (strain OS223)</name>
    <dbReference type="NCBI Taxonomy" id="407976"/>
    <lineage>
        <taxon>Bacteria</taxon>
        <taxon>Pseudomonadati</taxon>
        <taxon>Pseudomonadota</taxon>
        <taxon>Gammaproteobacteria</taxon>
        <taxon>Alteromonadales</taxon>
        <taxon>Shewanellaceae</taxon>
        <taxon>Shewanella</taxon>
    </lineage>
</organism>
<accession>B8E4J2</accession>
<evidence type="ECO:0000255" key="1">
    <source>
        <dbReference type="HAMAP-Rule" id="MF_01839"/>
    </source>
</evidence>
<proteinExistence type="inferred from homology"/>
<reference key="1">
    <citation type="submission" date="2008-12" db="EMBL/GenBank/DDBJ databases">
        <title>Complete sequence of chromosome of Shewanella baltica OS223.</title>
        <authorList>
            <consortium name="US DOE Joint Genome Institute"/>
            <person name="Lucas S."/>
            <person name="Copeland A."/>
            <person name="Lapidus A."/>
            <person name="Glavina del Rio T."/>
            <person name="Dalin E."/>
            <person name="Tice H."/>
            <person name="Bruce D."/>
            <person name="Goodwin L."/>
            <person name="Pitluck S."/>
            <person name="Chertkov O."/>
            <person name="Meincke L."/>
            <person name="Brettin T."/>
            <person name="Detter J.C."/>
            <person name="Han C."/>
            <person name="Kuske C.R."/>
            <person name="Larimer F."/>
            <person name="Land M."/>
            <person name="Hauser L."/>
            <person name="Kyrpides N."/>
            <person name="Ovchinnikova G."/>
            <person name="Brettar I."/>
            <person name="Rodrigues J."/>
            <person name="Konstantinidis K."/>
            <person name="Tiedje J."/>
        </authorList>
    </citation>
    <scope>NUCLEOTIDE SEQUENCE [LARGE SCALE GENOMIC DNA]</scope>
    <source>
        <strain>OS223</strain>
    </source>
</reference>
<comment type="function">
    <text evidence="1">Required for nucleoid occlusion (NO) phenomenon, which prevents Z-ring formation and cell division over the nucleoid. Acts as a DNA-associated cell division inhibitor that binds simultaneously chromosomal DNA and FtsZ, and disrupts the assembly of FtsZ polymers. SlmA-DNA-binding sequences (SBS) are dispersed on non-Ter regions of the chromosome, preventing FtsZ polymerization at these regions.</text>
</comment>
<comment type="subunit">
    <text evidence="1">Homodimer. Interacts with FtsZ.</text>
</comment>
<comment type="subcellular location">
    <subcellularLocation>
        <location evidence="1">Cytoplasm</location>
        <location evidence="1">Nucleoid</location>
    </subcellularLocation>
</comment>
<comment type="similarity">
    <text evidence="1">Belongs to the nucleoid occlusion factor SlmA family.</text>
</comment>
<dbReference type="EMBL" id="CP001252">
    <property type="protein sequence ID" value="ACK44933.1"/>
    <property type="molecule type" value="Genomic_DNA"/>
</dbReference>
<dbReference type="RefSeq" id="WP_006079866.1">
    <property type="nucleotide sequence ID" value="NC_011663.1"/>
</dbReference>
<dbReference type="SMR" id="B8E4J2"/>
<dbReference type="GeneID" id="11770724"/>
<dbReference type="KEGG" id="sbp:Sbal223_0399"/>
<dbReference type="HOGENOM" id="CLU_069356_5_0_6"/>
<dbReference type="Proteomes" id="UP000002507">
    <property type="component" value="Chromosome"/>
</dbReference>
<dbReference type="GO" id="GO:0043590">
    <property type="term" value="C:bacterial nucleoid"/>
    <property type="evidence" value="ECO:0007669"/>
    <property type="project" value="UniProtKB-UniRule"/>
</dbReference>
<dbReference type="GO" id="GO:0005737">
    <property type="term" value="C:cytoplasm"/>
    <property type="evidence" value="ECO:0007669"/>
    <property type="project" value="UniProtKB-UniRule"/>
</dbReference>
<dbReference type="GO" id="GO:0043565">
    <property type="term" value="F:sequence-specific DNA binding"/>
    <property type="evidence" value="ECO:0007669"/>
    <property type="project" value="UniProtKB-UniRule"/>
</dbReference>
<dbReference type="GO" id="GO:0051301">
    <property type="term" value="P:cell division"/>
    <property type="evidence" value="ECO:0007669"/>
    <property type="project" value="UniProtKB-KW"/>
</dbReference>
<dbReference type="GO" id="GO:0010974">
    <property type="term" value="P:negative regulation of division septum assembly"/>
    <property type="evidence" value="ECO:0007669"/>
    <property type="project" value="InterPro"/>
</dbReference>
<dbReference type="Gene3D" id="1.10.357.10">
    <property type="entry name" value="Tetracycline Repressor, domain 2"/>
    <property type="match status" value="1"/>
</dbReference>
<dbReference type="HAMAP" id="MF_01839">
    <property type="entry name" value="NO_factor_SlmA"/>
    <property type="match status" value="1"/>
</dbReference>
<dbReference type="InterPro" id="IPR009057">
    <property type="entry name" value="Homeodomain-like_sf"/>
</dbReference>
<dbReference type="InterPro" id="IPR050624">
    <property type="entry name" value="HTH-type_Tx_Regulator"/>
</dbReference>
<dbReference type="InterPro" id="IPR001647">
    <property type="entry name" value="HTH_TetR"/>
</dbReference>
<dbReference type="InterPro" id="IPR023769">
    <property type="entry name" value="NO_SlmA"/>
</dbReference>
<dbReference type="InterPro" id="IPR054580">
    <property type="entry name" value="SlmA-like_C"/>
</dbReference>
<dbReference type="NCBIfam" id="NF007015">
    <property type="entry name" value="PRK09480.1"/>
    <property type="match status" value="1"/>
</dbReference>
<dbReference type="PANTHER" id="PTHR43479">
    <property type="entry name" value="ACREF/ENVCD OPERON REPRESSOR-RELATED"/>
    <property type="match status" value="1"/>
</dbReference>
<dbReference type="PANTHER" id="PTHR43479:SF11">
    <property type="entry name" value="ACREF_ENVCD OPERON REPRESSOR-RELATED"/>
    <property type="match status" value="1"/>
</dbReference>
<dbReference type="Pfam" id="PF22276">
    <property type="entry name" value="SlmA-like_C"/>
    <property type="match status" value="1"/>
</dbReference>
<dbReference type="Pfam" id="PF00440">
    <property type="entry name" value="TetR_N"/>
    <property type="match status" value="1"/>
</dbReference>
<dbReference type="SUPFAM" id="SSF46689">
    <property type="entry name" value="Homeodomain-like"/>
    <property type="match status" value="1"/>
</dbReference>
<dbReference type="PROSITE" id="PS50977">
    <property type="entry name" value="HTH_TETR_2"/>
    <property type="match status" value="1"/>
</dbReference>
<name>SLMA_SHEB2</name>